<comment type="function">
    <text evidence="1">Catalyzes the hydrolytic deamination of adenosine and 2-deoxyadenosine.</text>
</comment>
<comment type="catalytic activity">
    <reaction evidence="1">
        <text>adenosine + H2O + H(+) = inosine + NH4(+)</text>
        <dbReference type="Rhea" id="RHEA:24408"/>
        <dbReference type="ChEBI" id="CHEBI:15377"/>
        <dbReference type="ChEBI" id="CHEBI:15378"/>
        <dbReference type="ChEBI" id="CHEBI:16335"/>
        <dbReference type="ChEBI" id="CHEBI:17596"/>
        <dbReference type="ChEBI" id="CHEBI:28938"/>
        <dbReference type="EC" id="3.5.4.4"/>
    </reaction>
    <physiologicalReaction direction="left-to-right" evidence="1">
        <dbReference type="Rhea" id="RHEA:24409"/>
    </physiologicalReaction>
</comment>
<comment type="catalytic activity">
    <reaction evidence="1">
        <text>2'-deoxyadenosine + H2O + H(+) = 2'-deoxyinosine + NH4(+)</text>
        <dbReference type="Rhea" id="RHEA:28190"/>
        <dbReference type="ChEBI" id="CHEBI:15377"/>
        <dbReference type="ChEBI" id="CHEBI:15378"/>
        <dbReference type="ChEBI" id="CHEBI:17256"/>
        <dbReference type="ChEBI" id="CHEBI:28938"/>
        <dbReference type="ChEBI" id="CHEBI:28997"/>
        <dbReference type="EC" id="3.5.4.4"/>
    </reaction>
    <physiologicalReaction direction="left-to-right" evidence="1">
        <dbReference type="Rhea" id="RHEA:28191"/>
    </physiologicalReaction>
</comment>
<comment type="cofactor">
    <cofactor evidence="1">
        <name>Zn(2+)</name>
        <dbReference type="ChEBI" id="CHEBI:29105"/>
    </cofactor>
    <text evidence="1">Binds 1 zinc ion per subunit.</text>
</comment>
<comment type="similarity">
    <text evidence="1">Belongs to the metallo-dependent hydrolases superfamily. Adenosine and AMP deaminases family. Adenosine deaminase subfamily.</text>
</comment>
<dbReference type="EC" id="3.5.4.4" evidence="1"/>
<dbReference type="EMBL" id="AL766846">
    <property type="protein sequence ID" value="CAD46227.1"/>
    <property type="molecule type" value="Genomic_DNA"/>
</dbReference>
<dbReference type="RefSeq" id="WP_000189639.1">
    <property type="nucleotide sequence ID" value="NC_004368.1"/>
</dbReference>
<dbReference type="SMR" id="P63909"/>
<dbReference type="KEGG" id="san:gbs0583"/>
<dbReference type="eggNOG" id="COG1816">
    <property type="taxonomic scope" value="Bacteria"/>
</dbReference>
<dbReference type="HOGENOM" id="CLU_039228_0_0_9"/>
<dbReference type="Proteomes" id="UP000000823">
    <property type="component" value="Chromosome"/>
</dbReference>
<dbReference type="GO" id="GO:0005829">
    <property type="term" value="C:cytosol"/>
    <property type="evidence" value="ECO:0007669"/>
    <property type="project" value="TreeGrafter"/>
</dbReference>
<dbReference type="GO" id="GO:0046936">
    <property type="term" value="F:2'-deoxyadenosine deaminase activity"/>
    <property type="evidence" value="ECO:0007669"/>
    <property type="project" value="RHEA"/>
</dbReference>
<dbReference type="GO" id="GO:0004000">
    <property type="term" value="F:adenosine deaminase activity"/>
    <property type="evidence" value="ECO:0007669"/>
    <property type="project" value="UniProtKB-UniRule"/>
</dbReference>
<dbReference type="GO" id="GO:0008270">
    <property type="term" value="F:zinc ion binding"/>
    <property type="evidence" value="ECO:0007669"/>
    <property type="project" value="UniProtKB-UniRule"/>
</dbReference>
<dbReference type="GO" id="GO:0006154">
    <property type="term" value="P:adenosine catabolic process"/>
    <property type="evidence" value="ECO:0007669"/>
    <property type="project" value="TreeGrafter"/>
</dbReference>
<dbReference type="GO" id="GO:0043103">
    <property type="term" value="P:hypoxanthine salvage"/>
    <property type="evidence" value="ECO:0007669"/>
    <property type="project" value="TreeGrafter"/>
</dbReference>
<dbReference type="GO" id="GO:0046103">
    <property type="term" value="P:inosine biosynthetic process"/>
    <property type="evidence" value="ECO:0007669"/>
    <property type="project" value="TreeGrafter"/>
</dbReference>
<dbReference type="GO" id="GO:0009117">
    <property type="term" value="P:nucleotide metabolic process"/>
    <property type="evidence" value="ECO:0007669"/>
    <property type="project" value="UniProtKB-KW"/>
</dbReference>
<dbReference type="GO" id="GO:0009168">
    <property type="term" value="P:purine ribonucleoside monophosphate biosynthetic process"/>
    <property type="evidence" value="ECO:0007669"/>
    <property type="project" value="UniProtKB-UniRule"/>
</dbReference>
<dbReference type="CDD" id="cd01320">
    <property type="entry name" value="ADA"/>
    <property type="match status" value="1"/>
</dbReference>
<dbReference type="Gene3D" id="3.20.20.140">
    <property type="entry name" value="Metal-dependent hydrolases"/>
    <property type="match status" value="1"/>
</dbReference>
<dbReference type="HAMAP" id="MF_00540">
    <property type="entry name" value="A_deaminase"/>
    <property type="match status" value="1"/>
</dbReference>
<dbReference type="InterPro" id="IPR028893">
    <property type="entry name" value="A_deaminase"/>
</dbReference>
<dbReference type="InterPro" id="IPR001365">
    <property type="entry name" value="A_deaminase_dom"/>
</dbReference>
<dbReference type="InterPro" id="IPR006330">
    <property type="entry name" value="Ado/ade_deaminase"/>
</dbReference>
<dbReference type="InterPro" id="IPR032466">
    <property type="entry name" value="Metal_Hydrolase"/>
</dbReference>
<dbReference type="NCBIfam" id="TIGR01430">
    <property type="entry name" value="aden_deam"/>
    <property type="match status" value="1"/>
</dbReference>
<dbReference type="PANTHER" id="PTHR11409">
    <property type="entry name" value="ADENOSINE DEAMINASE"/>
    <property type="match status" value="1"/>
</dbReference>
<dbReference type="PANTHER" id="PTHR11409:SF43">
    <property type="entry name" value="ADENOSINE DEAMINASE"/>
    <property type="match status" value="1"/>
</dbReference>
<dbReference type="Pfam" id="PF00962">
    <property type="entry name" value="A_deaminase"/>
    <property type="match status" value="1"/>
</dbReference>
<dbReference type="SUPFAM" id="SSF51556">
    <property type="entry name" value="Metallo-dependent hydrolases"/>
    <property type="match status" value="1"/>
</dbReference>
<keyword id="KW-0378">Hydrolase</keyword>
<keyword id="KW-0479">Metal-binding</keyword>
<keyword id="KW-0546">Nucleotide metabolism</keyword>
<keyword id="KW-0862">Zinc</keyword>
<accession>P63909</accession>
<accession>Q8E125</accession>
<accession>Q8E6I0</accession>
<proteinExistence type="inferred from homology"/>
<reference key="1">
    <citation type="journal article" date="2002" name="Mol. Microbiol.">
        <title>Genome sequence of Streptococcus agalactiae, a pathogen causing invasive neonatal disease.</title>
        <authorList>
            <person name="Glaser P."/>
            <person name="Rusniok C."/>
            <person name="Buchrieser C."/>
            <person name="Chevalier F."/>
            <person name="Frangeul L."/>
            <person name="Msadek T."/>
            <person name="Zouine M."/>
            <person name="Couve E."/>
            <person name="Lalioui L."/>
            <person name="Poyart C."/>
            <person name="Trieu-Cuot P."/>
            <person name="Kunst F."/>
        </authorList>
    </citation>
    <scope>NUCLEOTIDE SEQUENCE [LARGE SCALE GENOMIC DNA]</scope>
    <source>
        <strain>NEM316</strain>
    </source>
</reference>
<protein>
    <recommendedName>
        <fullName evidence="1">Adenosine deaminase</fullName>
        <ecNumber evidence="1">3.5.4.4</ecNumber>
    </recommendedName>
    <alternativeName>
        <fullName evidence="1">Adenosine aminohydrolase</fullName>
    </alternativeName>
</protein>
<evidence type="ECO:0000255" key="1">
    <source>
        <dbReference type="HAMAP-Rule" id="MF_00540"/>
    </source>
</evidence>
<gene>
    <name evidence="1" type="primary">add</name>
    <name type="ordered locus">gbs0583</name>
</gene>
<sequence length="340" mass="37777">MTQAVLKELAKAELHCHLDGSLSLPAIRKLANMADIILPSSDKELRKYVIAPAQTESLVDYLKTFEFIRPLLQTKEALRFAAYDVARQAALENVIYIEIRFAPELSMDKGLTASDTVLAVLEGLADAQKEFNIVARALVCGMRQSSHKTTKDIIKHIVDLAPKGLVGFDFAGDEFSYPTDSLVDLIQEVKRSGYPMTLHAGECGCAKHIADSLNLGIKRMGHVTALTGQRDLIKRFVEEDAVAEMCLTSNLQTKAASSIQSFPYQELYDAGGKITINTDNRTVSDTNLTKEYSLFVTYFGTKIEDFLVFNQNAVKASFTSDSEKDTLLHKLQENYDSYLK</sequence>
<feature type="chain" id="PRO_0000194392" description="Adenosine deaminase">
    <location>
        <begin position="1"/>
        <end position="340"/>
    </location>
</feature>
<feature type="active site" description="Proton donor" evidence="1">
    <location>
        <position position="202"/>
    </location>
</feature>
<feature type="binding site" evidence="1">
    <location>
        <position position="15"/>
    </location>
    <ligand>
        <name>Zn(2+)</name>
        <dbReference type="ChEBI" id="CHEBI:29105"/>
        <note>catalytic</note>
    </ligand>
</feature>
<feature type="binding site" evidence="1">
    <location>
        <position position="17"/>
    </location>
    <ligand>
        <name>substrate</name>
    </ligand>
</feature>
<feature type="binding site" evidence="1">
    <location>
        <position position="17"/>
    </location>
    <ligand>
        <name>Zn(2+)</name>
        <dbReference type="ChEBI" id="CHEBI:29105"/>
        <note>catalytic</note>
    </ligand>
</feature>
<feature type="binding site" evidence="1">
    <location>
        <position position="19"/>
    </location>
    <ligand>
        <name>substrate</name>
    </ligand>
</feature>
<feature type="binding site" evidence="1">
    <location>
        <position position="172"/>
    </location>
    <ligand>
        <name>substrate</name>
    </ligand>
</feature>
<feature type="binding site" evidence="1">
    <location>
        <position position="199"/>
    </location>
    <ligand>
        <name>Zn(2+)</name>
        <dbReference type="ChEBI" id="CHEBI:29105"/>
        <note>catalytic</note>
    </ligand>
</feature>
<feature type="binding site" evidence="1">
    <location>
        <position position="279"/>
    </location>
    <ligand>
        <name>Zn(2+)</name>
        <dbReference type="ChEBI" id="CHEBI:29105"/>
        <note>catalytic</note>
    </ligand>
</feature>
<feature type="site" description="Important for catalytic activity" evidence="1">
    <location>
        <position position="222"/>
    </location>
</feature>
<organism>
    <name type="scientific">Streptococcus agalactiae serotype III (strain NEM316)</name>
    <dbReference type="NCBI Taxonomy" id="211110"/>
    <lineage>
        <taxon>Bacteria</taxon>
        <taxon>Bacillati</taxon>
        <taxon>Bacillota</taxon>
        <taxon>Bacilli</taxon>
        <taxon>Lactobacillales</taxon>
        <taxon>Streptococcaceae</taxon>
        <taxon>Streptococcus</taxon>
    </lineage>
</organism>
<name>ADD_STRA3</name>